<gene>
    <name evidence="1" type="primary">clpP</name>
    <name type="ordered locus">Poptr_cp048</name>
</gene>
<feature type="chain" id="PRO_0000309311" description="ATP-dependent Clp protease proteolytic subunit">
    <location>
        <begin position="1"/>
        <end position="196"/>
    </location>
</feature>
<feature type="active site" description="Nucleophile" evidence="1">
    <location>
        <position position="101"/>
    </location>
</feature>
<feature type="active site" evidence="1">
    <location>
        <position position="126"/>
    </location>
</feature>
<sequence length="196" mass="22041">MPIGVPKVPFRNPGEDSSNWIDVYNRLYRERLLFLGQDIDSEISNQLIGLMVYLSTESEIKDLYLFINSPGGWVIPGIAIYDTMQFVRPDVQTVCMGLAASMGSFILVGGKITKRLAFPHARVMIHQPFAAFYEAQIGEFVLEAEELLKLREILTRVYAQRTGKPLWVVSEDMERDVFMSAAEAQVHGIVDLVAVA</sequence>
<proteinExistence type="inferred from homology"/>
<name>CLPP_POPTR</name>
<reference key="1">
    <citation type="journal article" date="2006" name="Science">
        <title>The genome of black cottonwood, Populus trichocarpa (Torr. &amp; Gray).</title>
        <authorList>
            <person name="Tuskan G.A."/>
            <person name="Difazio S."/>
            <person name="Jansson S."/>
            <person name="Bohlmann J."/>
            <person name="Grigoriev I."/>
            <person name="Hellsten U."/>
            <person name="Putnam N."/>
            <person name="Ralph S."/>
            <person name="Rombauts S."/>
            <person name="Salamov A."/>
            <person name="Schein J."/>
            <person name="Sterck L."/>
            <person name="Aerts A."/>
            <person name="Bhalerao R.R."/>
            <person name="Bhalerao R.P."/>
            <person name="Blaudez D."/>
            <person name="Boerjan W."/>
            <person name="Brun A."/>
            <person name="Brunner A."/>
            <person name="Busov V."/>
            <person name="Campbell M."/>
            <person name="Carlson J."/>
            <person name="Chalot M."/>
            <person name="Chapman J."/>
            <person name="Chen G.-L."/>
            <person name="Cooper D."/>
            <person name="Coutinho P.M."/>
            <person name="Couturier J."/>
            <person name="Covert S."/>
            <person name="Cronk Q."/>
            <person name="Cunningham R."/>
            <person name="Davis J."/>
            <person name="Degroeve S."/>
            <person name="Dejardin A."/>
            <person name="dePamphilis C.W."/>
            <person name="Detter J."/>
            <person name="Dirks B."/>
            <person name="Dubchak I."/>
            <person name="Duplessis S."/>
            <person name="Ehlting J."/>
            <person name="Ellis B."/>
            <person name="Gendler K."/>
            <person name="Goodstein D."/>
            <person name="Gribskov M."/>
            <person name="Grimwood J."/>
            <person name="Groover A."/>
            <person name="Gunter L."/>
            <person name="Hamberger B."/>
            <person name="Heinze B."/>
            <person name="Helariutta Y."/>
            <person name="Henrissat B."/>
            <person name="Holligan D."/>
            <person name="Holt R."/>
            <person name="Huang W."/>
            <person name="Islam-Faridi N."/>
            <person name="Jones S."/>
            <person name="Jones-Rhoades M."/>
            <person name="Jorgensen R."/>
            <person name="Joshi C."/>
            <person name="Kangasjaervi J."/>
            <person name="Karlsson J."/>
            <person name="Kelleher C."/>
            <person name="Kirkpatrick R."/>
            <person name="Kirst M."/>
            <person name="Kohler A."/>
            <person name="Kalluri U."/>
            <person name="Larimer F."/>
            <person name="Leebens-Mack J."/>
            <person name="Leple J.-C."/>
            <person name="Locascio P."/>
            <person name="Lou Y."/>
            <person name="Lucas S."/>
            <person name="Martin F."/>
            <person name="Montanini B."/>
            <person name="Napoli C."/>
            <person name="Nelson D.R."/>
            <person name="Nelson C."/>
            <person name="Nieminen K."/>
            <person name="Nilsson O."/>
            <person name="Pereda V."/>
            <person name="Peter G."/>
            <person name="Philippe R."/>
            <person name="Pilate G."/>
            <person name="Poliakov A."/>
            <person name="Razumovskaya J."/>
            <person name="Richardson P."/>
            <person name="Rinaldi C."/>
            <person name="Ritland K."/>
            <person name="Rouze P."/>
            <person name="Ryaboy D."/>
            <person name="Schmutz J."/>
            <person name="Schrader J."/>
            <person name="Segerman B."/>
            <person name="Shin H."/>
            <person name="Siddiqui A."/>
            <person name="Sterky F."/>
            <person name="Terry A."/>
            <person name="Tsai C.-J."/>
            <person name="Uberbacher E."/>
            <person name="Unneberg P."/>
            <person name="Vahala J."/>
            <person name="Wall K."/>
            <person name="Wessler S."/>
            <person name="Yang G."/>
            <person name="Yin T."/>
            <person name="Douglas C."/>
            <person name="Marra M."/>
            <person name="Sandberg G."/>
            <person name="Van de Peer Y."/>
            <person name="Rokhsar D.S."/>
        </authorList>
    </citation>
    <scope>NUCLEOTIDE SEQUENCE [LARGE SCALE GENOMIC DNA]</scope>
    <source>
        <strain>cv. Nisqually</strain>
    </source>
</reference>
<dbReference type="EC" id="3.4.21.92" evidence="1"/>
<dbReference type="EMBL" id="EF489041">
    <property type="protein sequence ID" value="ABO36731.1"/>
    <property type="molecule type" value="Genomic_DNA"/>
</dbReference>
<dbReference type="RefSeq" id="YP_001109527.1">
    <property type="nucleotide sequence ID" value="NC_009143.1"/>
</dbReference>
<dbReference type="SMR" id="A4GYT6"/>
<dbReference type="FunCoup" id="A4GYT6">
    <property type="interactions" value="13"/>
</dbReference>
<dbReference type="STRING" id="3694.A4GYT6"/>
<dbReference type="MEROPS" id="S14.002"/>
<dbReference type="GeneID" id="4929698"/>
<dbReference type="KEGG" id="pop:4929698"/>
<dbReference type="InParanoid" id="A4GYT6"/>
<dbReference type="OrthoDB" id="813113at2759"/>
<dbReference type="Proteomes" id="UP000006729">
    <property type="component" value="Chloroplast"/>
</dbReference>
<dbReference type="ExpressionAtlas" id="A4GYT6">
    <property type="expression patterns" value="baseline and differential"/>
</dbReference>
<dbReference type="GO" id="GO:0009570">
    <property type="term" value="C:chloroplast stroma"/>
    <property type="evidence" value="ECO:0007669"/>
    <property type="project" value="UniProtKB-SubCell"/>
</dbReference>
<dbReference type="GO" id="GO:0009368">
    <property type="term" value="C:endopeptidase Clp complex"/>
    <property type="evidence" value="ECO:0000318"/>
    <property type="project" value="GO_Central"/>
</dbReference>
<dbReference type="GO" id="GO:0004176">
    <property type="term" value="F:ATP-dependent peptidase activity"/>
    <property type="evidence" value="ECO:0000318"/>
    <property type="project" value="GO_Central"/>
</dbReference>
<dbReference type="GO" id="GO:0051117">
    <property type="term" value="F:ATPase binding"/>
    <property type="evidence" value="ECO:0000318"/>
    <property type="project" value="GO_Central"/>
</dbReference>
<dbReference type="GO" id="GO:0004252">
    <property type="term" value="F:serine-type endopeptidase activity"/>
    <property type="evidence" value="ECO:0000318"/>
    <property type="project" value="GO_Central"/>
</dbReference>
<dbReference type="GO" id="GO:0006515">
    <property type="term" value="P:protein quality control for misfolded or incompletely synthesized proteins"/>
    <property type="evidence" value="ECO:0000318"/>
    <property type="project" value="GO_Central"/>
</dbReference>
<dbReference type="CDD" id="cd07017">
    <property type="entry name" value="S14_ClpP_2"/>
    <property type="match status" value="1"/>
</dbReference>
<dbReference type="FunFam" id="3.90.226.10:FF:000006">
    <property type="entry name" value="ATP-dependent Clp protease proteolytic subunit"/>
    <property type="match status" value="1"/>
</dbReference>
<dbReference type="Gene3D" id="3.90.226.10">
    <property type="entry name" value="2-enoyl-CoA Hydratase, Chain A, domain 1"/>
    <property type="match status" value="1"/>
</dbReference>
<dbReference type="HAMAP" id="MF_00444">
    <property type="entry name" value="ClpP"/>
    <property type="match status" value="1"/>
</dbReference>
<dbReference type="InterPro" id="IPR001907">
    <property type="entry name" value="ClpP"/>
</dbReference>
<dbReference type="InterPro" id="IPR029045">
    <property type="entry name" value="ClpP/crotonase-like_dom_sf"/>
</dbReference>
<dbReference type="InterPro" id="IPR023562">
    <property type="entry name" value="ClpP/TepA"/>
</dbReference>
<dbReference type="InterPro" id="IPR033135">
    <property type="entry name" value="ClpP_His_AS"/>
</dbReference>
<dbReference type="InterPro" id="IPR018215">
    <property type="entry name" value="ClpP_Ser_AS"/>
</dbReference>
<dbReference type="PANTHER" id="PTHR10381">
    <property type="entry name" value="ATP-DEPENDENT CLP PROTEASE PROTEOLYTIC SUBUNIT"/>
    <property type="match status" value="1"/>
</dbReference>
<dbReference type="PANTHER" id="PTHR10381:SF15">
    <property type="entry name" value="CHLOROPLASTIC ATP-DEPENDENT CLP PROTEASE PROTEOLYTIC SUBUNIT 1"/>
    <property type="match status" value="1"/>
</dbReference>
<dbReference type="Pfam" id="PF00574">
    <property type="entry name" value="CLP_protease"/>
    <property type="match status" value="1"/>
</dbReference>
<dbReference type="PRINTS" id="PR00127">
    <property type="entry name" value="CLPPROTEASEP"/>
</dbReference>
<dbReference type="SUPFAM" id="SSF52096">
    <property type="entry name" value="ClpP/crotonase"/>
    <property type="match status" value="1"/>
</dbReference>
<dbReference type="PROSITE" id="PS00382">
    <property type="entry name" value="CLP_PROTEASE_HIS"/>
    <property type="match status" value="1"/>
</dbReference>
<dbReference type="PROSITE" id="PS00381">
    <property type="entry name" value="CLP_PROTEASE_SER"/>
    <property type="match status" value="1"/>
</dbReference>
<evidence type="ECO:0000255" key="1">
    <source>
        <dbReference type="HAMAP-Rule" id="MF_00444"/>
    </source>
</evidence>
<geneLocation type="chloroplast"/>
<accession>A4GYT6</accession>
<organism>
    <name type="scientific">Populus trichocarpa</name>
    <name type="common">Western balsam poplar</name>
    <name type="synonym">Populus balsamifera subsp. trichocarpa</name>
    <dbReference type="NCBI Taxonomy" id="3694"/>
    <lineage>
        <taxon>Eukaryota</taxon>
        <taxon>Viridiplantae</taxon>
        <taxon>Streptophyta</taxon>
        <taxon>Embryophyta</taxon>
        <taxon>Tracheophyta</taxon>
        <taxon>Spermatophyta</taxon>
        <taxon>Magnoliopsida</taxon>
        <taxon>eudicotyledons</taxon>
        <taxon>Gunneridae</taxon>
        <taxon>Pentapetalae</taxon>
        <taxon>rosids</taxon>
        <taxon>fabids</taxon>
        <taxon>Malpighiales</taxon>
        <taxon>Salicaceae</taxon>
        <taxon>Saliceae</taxon>
        <taxon>Populus</taxon>
    </lineage>
</organism>
<protein>
    <recommendedName>
        <fullName evidence="1">ATP-dependent Clp protease proteolytic subunit</fullName>
        <ecNumber evidence="1">3.4.21.92</ecNumber>
    </recommendedName>
    <alternativeName>
        <fullName evidence="1">Endopeptidase Clp</fullName>
    </alternativeName>
</protein>
<keyword id="KW-0150">Chloroplast</keyword>
<keyword id="KW-0378">Hydrolase</keyword>
<keyword id="KW-0934">Plastid</keyword>
<keyword id="KW-0645">Protease</keyword>
<keyword id="KW-1185">Reference proteome</keyword>
<keyword id="KW-0720">Serine protease</keyword>
<comment type="function">
    <text evidence="1">Cleaves peptides in various proteins in a process that requires ATP hydrolysis. Has a chymotrypsin-like activity. Plays a major role in the degradation of misfolded proteins.</text>
</comment>
<comment type="catalytic activity">
    <reaction evidence="1">
        <text>Hydrolysis of proteins to small peptides in the presence of ATP and magnesium. alpha-casein is the usual test substrate. In the absence of ATP, only oligopeptides shorter than five residues are hydrolyzed (such as succinyl-Leu-Tyr-|-NHMec, and Leu-Tyr-Leu-|-Tyr-Trp, in which cleavage of the -Tyr-|-Leu- and -Tyr-|-Trp bonds also occurs).</text>
        <dbReference type="EC" id="3.4.21.92"/>
    </reaction>
</comment>
<comment type="subunit">
    <text>Component of the chloroplastic Clp protease core complex.</text>
</comment>
<comment type="subcellular location">
    <subcellularLocation>
        <location evidence="1">Plastid</location>
        <location evidence="1">Chloroplast stroma</location>
    </subcellularLocation>
</comment>
<comment type="similarity">
    <text evidence="1">Belongs to the peptidase S14 family.</text>
</comment>